<dbReference type="EC" id="3.2.1.14" evidence="6"/>
<dbReference type="EC" id="2.4.-.-" evidence="6"/>
<dbReference type="EMBL" id="AAHF01000008">
    <property type="protein sequence ID" value="EAL87409.1"/>
    <property type="molecule type" value="Genomic_DNA"/>
</dbReference>
<dbReference type="RefSeq" id="XP_749447.1">
    <property type="nucleotide sequence ID" value="XM_744354.1"/>
</dbReference>
<dbReference type="SMR" id="Q4WI46"/>
<dbReference type="FunCoup" id="Q4WI46">
    <property type="interactions" value="390"/>
</dbReference>
<dbReference type="STRING" id="330879.Q4WI46"/>
<dbReference type="GlyCosmos" id="Q4WI46">
    <property type="glycosylation" value="5 sites, No reported glycans"/>
</dbReference>
<dbReference type="EnsemblFungi" id="EAL87409">
    <property type="protein sequence ID" value="EAL87409"/>
    <property type="gene ID" value="AFUA_2G03120"/>
</dbReference>
<dbReference type="GeneID" id="3506821"/>
<dbReference type="KEGG" id="afm:AFUA_2G03120"/>
<dbReference type="VEuPathDB" id="FungiDB:Afu2g03120"/>
<dbReference type="eggNOG" id="ENOG502QVQI">
    <property type="taxonomic scope" value="Eukaryota"/>
</dbReference>
<dbReference type="HOGENOM" id="CLU_040459_0_0_1"/>
<dbReference type="InParanoid" id="Q4WI46"/>
<dbReference type="OMA" id="WNATANQ"/>
<dbReference type="OrthoDB" id="4781at2759"/>
<dbReference type="Proteomes" id="UP000002530">
    <property type="component" value="Chromosome 2"/>
</dbReference>
<dbReference type="GO" id="GO:0000144">
    <property type="term" value="C:cellular bud neck septin ring"/>
    <property type="evidence" value="ECO:0007669"/>
    <property type="project" value="EnsemblFungi"/>
</dbReference>
<dbReference type="GO" id="GO:0009277">
    <property type="term" value="C:fungal-type cell wall"/>
    <property type="evidence" value="ECO:0000314"/>
    <property type="project" value="AspGD"/>
</dbReference>
<dbReference type="GO" id="GO:0005886">
    <property type="term" value="C:plasma membrane"/>
    <property type="evidence" value="ECO:0007669"/>
    <property type="project" value="UniProtKB-SubCell"/>
</dbReference>
<dbReference type="GO" id="GO:0098552">
    <property type="term" value="C:side of membrane"/>
    <property type="evidence" value="ECO:0007669"/>
    <property type="project" value="UniProtKB-KW"/>
</dbReference>
<dbReference type="GO" id="GO:0016757">
    <property type="term" value="F:glycosyltransferase activity"/>
    <property type="evidence" value="ECO:0007669"/>
    <property type="project" value="EnsemblFungi"/>
</dbReference>
<dbReference type="GO" id="GO:0004553">
    <property type="term" value="F:hydrolase activity, hydrolyzing O-glycosyl compounds"/>
    <property type="evidence" value="ECO:0007669"/>
    <property type="project" value="InterPro"/>
</dbReference>
<dbReference type="GO" id="GO:0005975">
    <property type="term" value="P:carbohydrate metabolic process"/>
    <property type="evidence" value="ECO:0007669"/>
    <property type="project" value="InterPro"/>
</dbReference>
<dbReference type="GO" id="GO:0006030">
    <property type="term" value="P:chitin metabolic process"/>
    <property type="evidence" value="ECO:0007669"/>
    <property type="project" value="EnsemblFungi"/>
</dbReference>
<dbReference type="GO" id="GO:0031505">
    <property type="term" value="P:fungal-type cell wall organization"/>
    <property type="evidence" value="ECO:0007669"/>
    <property type="project" value="EnsemblFungi"/>
</dbReference>
<dbReference type="CDD" id="cd02183">
    <property type="entry name" value="GH16_fungal_CRH1_transglycosylase"/>
    <property type="match status" value="1"/>
</dbReference>
<dbReference type="FunFam" id="2.60.120.200:FF:000159">
    <property type="entry name" value="Glycosidase"/>
    <property type="match status" value="1"/>
</dbReference>
<dbReference type="Gene3D" id="2.60.120.200">
    <property type="match status" value="1"/>
</dbReference>
<dbReference type="InterPro" id="IPR013320">
    <property type="entry name" value="ConA-like_dom_sf"/>
</dbReference>
<dbReference type="InterPro" id="IPR000757">
    <property type="entry name" value="GH16"/>
</dbReference>
<dbReference type="InterPro" id="IPR017168">
    <property type="entry name" value="Glyco_hydro_16_CRH1_prd"/>
</dbReference>
<dbReference type="InterPro" id="IPR050546">
    <property type="entry name" value="Glycosyl_Hydrlase_16"/>
</dbReference>
<dbReference type="PANTHER" id="PTHR10963:SF22">
    <property type="entry name" value="GLYCOSIDASE CRH2-RELATED"/>
    <property type="match status" value="1"/>
</dbReference>
<dbReference type="PANTHER" id="PTHR10963">
    <property type="entry name" value="GLYCOSYL HYDROLASE-RELATED"/>
    <property type="match status" value="1"/>
</dbReference>
<dbReference type="Pfam" id="PF00722">
    <property type="entry name" value="Glyco_hydro_16"/>
    <property type="match status" value="1"/>
</dbReference>
<dbReference type="PIRSF" id="PIRSF037299">
    <property type="entry name" value="Glycosidase_CRH1_prd"/>
    <property type="match status" value="1"/>
</dbReference>
<dbReference type="SUPFAM" id="SSF49899">
    <property type="entry name" value="Concanavalin A-like lectins/glucanases"/>
    <property type="match status" value="1"/>
</dbReference>
<dbReference type="PROSITE" id="PS51762">
    <property type="entry name" value="GH16_2"/>
    <property type="match status" value="1"/>
</dbReference>
<reference key="1">
    <citation type="journal article" date="2005" name="Nature">
        <title>Genomic sequence of the pathogenic and allergenic filamentous fungus Aspergillus fumigatus.</title>
        <authorList>
            <person name="Nierman W.C."/>
            <person name="Pain A."/>
            <person name="Anderson M.J."/>
            <person name="Wortman J.R."/>
            <person name="Kim H.S."/>
            <person name="Arroyo J."/>
            <person name="Berriman M."/>
            <person name="Abe K."/>
            <person name="Archer D.B."/>
            <person name="Bermejo C."/>
            <person name="Bennett J.W."/>
            <person name="Bowyer P."/>
            <person name="Chen D."/>
            <person name="Collins M."/>
            <person name="Coulsen R."/>
            <person name="Davies R."/>
            <person name="Dyer P.S."/>
            <person name="Farman M.L."/>
            <person name="Fedorova N."/>
            <person name="Fedorova N.D."/>
            <person name="Feldblyum T.V."/>
            <person name="Fischer R."/>
            <person name="Fosker N."/>
            <person name="Fraser A."/>
            <person name="Garcia J.L."/>
            <person name="Garcia M.J."/>
            <person name="Goble A."/>
            <person name="Goldman G.H."/>
            <person name="Gomi K."/>
            <person name="Griffith-Jones S."/>
            <person name="Gwilliam R."/>
            <person name="Haas B.J."/>
            <person name="Haas H."/>
            <person name="Harris D.E."/>
            <person name="Horiuchi H."/>
            <person name="Huang J."/>
            <person name="Humphray S."/>
            <person name="Jimenez J."/>
            <person name="Keller N."/>
            <person name="Khouri H."/>
            <person name="Kitamoto K."/>
            <person name="Kobayashi T."/>
            <person name="Konzack S."/>
            <person name="Kulkarni R."/>
            <person name="Kumagai T."/>
            <person name="Lafton A."/>
            <person name="Latge J.-P."/>
            <person name="Li W."/>
            <person name="Lord A."/>
            <person name="Lu C."/>
            <person name="Majoros W.H."/>
            <person name="May G.S."/>
            <person name="Miller B.L."/>
            <person name="Mohamoud Y."/>
            <person name="Molina M."/>
            <person name="Monod M."/>
            <person name="Mouyna I."/>
            <person name="Mulligan S."/>
            <person name="Murphy L.D."/>
            <person name="O'Neil S."/>
            <person name="Paulsen I."/>
            <person name="Penalva M.A."/>
            <person name="Pertea M."/>
            <person name="Price C."/>
            <person name="Pritchard B.L."/>
            <person name="Quail M.A."/>
            <person name="Rabbinowitsch E."/>
            <person name="Rawlins N."/>
            <person name="Rajandream M.A."/>
            <person name="Reichard U."/>
            <person name="Renauld H."/>
            <person name="Robson G.D."/>
            <person name="Rodriguez de Cordoba S."/>
            <person name="Rodriguez-Pena J.M."/>
            <person name="Ronning C.M."/>
            <person name="Rutter S."/>
            <person name="Salzberg S.L."/>
            <person name="Sanchez M."/>
            <person name="Sanchez-Ferrero J.C."/>
            <person name="Saunders D."/>
            <person name="Seeger K."/>
            <person name="Squares R."/>
            <person name="Squares S."/>
            <person name="Takeuchi M."/>
            <person name="Tekaia F."/>
            <person name="Turner G."/>
            <person name="Vazquez de Aldana C.R."/>
            <person name="Weidman J."/>
            <person name="White O."/>
            <person name="Woodward J.R."/>
            <person name="Yu J.-H."/>
            <person name="Fraser C.M."/>
            <person name="Galagan J.E."/>
            <person name="Asai K."/>
            <person name="Machida M."/>
            <person name="Hall N."/>
            <person name="Barrell B.G."/>
            <person name="Denning D.W."/>
        </authorList>
    </citation>
    <scope>NUCLEOTIDE SEQUENCE [LARGE SCALE GENOMIC DNA]</scope>
    <source>
        <strain>ATCC MYA-4609 / CBS 101355 / FGSC A1100 / Af293</strain>
    </source>
</reference>
<reference key="2">
    <citation type="journal article" date="2001" name="Electrophoresis">
        <title>Proteome analysis of Aspergillus fumigatus identifies glycosylphosphatidylinositol-anchored proteins associated to the cell wall biosynthesis.</title>
        <authorList>
            <person name="Bruneau J.-M."/>
            <person name="Magnin T."/>
            <person name="Tagat E."/>
            <person name="Legrand R."/>
            <person name="Bernard M."/>
            <person name="Diaquin M."/>
            <person name="Fudali C."/>
            <person name="Latge J.-P."/>
        </authorList>
    </citation>
    <scope>PROTEIN SEQUENCE OF 100-104 AND 242-251</scope>
    <scope>GPI-ANCHOR</scope>
</reference>
<reference key="3">
    <citation type="journal article" date="2003" name="Glycobiology">
        <title>Structures of the glycosylphosphatidylinositol membrane anchors from Aspergillus fumigatus membrane proteins.</title>
        <authorList>
            <person name="Fontaine T."/>
            <person name="Magnin T."/>
            <person name="Melhert A."/>
            <person name="Lamont D."/>
            <person name="Latge J.-P."/>
            <person name="Ferguson M.A.J."/>
        </authorList>
    </citation>
    <scope>STRUCTURE OF GPI-ANCHOR</scope>
</reference>
<reference key="4">
    <citation type="journal article" date="2019" name="Nat. Commun.">
        <title>Mechanisms of redundancy and specificity of the Aspergillus fumigatus Crh transglycosylases.</title>
        <authorList>
            <person name="Fang W."/>
            <person name="Sanz A.B."/>
            <person name="Bartual S.G."/>
            <person name="Wang B."/>
            <person name="Ferenbach A.T."/>
            <person name="Farkas V."/>
            <person name="Hurtado-Guerrero R."/>
            <person name="Arroyo J."/>
            <person name="van Aalten D.M.F."/>
        </authorList>
    </citation>
    <scope>FUNCTION</scope>
    <scope>DISRUPTION PHENOTYPE</scope>
</reference>
<organism>
    <name type="scientific">Aspergillus fumigatus (strain ATCC MYA-4609 / CBS 101355 / FGSC A1100 / Af293)</name>
    <name type="common">Neosartorya fumigata</name>
    <dbReference type="NCBI Taxonomy" id="330879"/>
    <lineage>
        <taxon>Eukaryota</taxon>
        <taxon>Fungi</taxon>
        <taxon>Dikarya</taxon>
        <taxon>Ascomycota</taxon>
        <taxon>Pezizomycotina</taxon>
        <taxon>Eurotiomycetes</taxon>
        <taxon>Eurotiomycetidae</taxon>
        <taxon>Eurotiales</taxon>
        <taxon>Aspergillaceae</taxon>
        <taxon>Aspergillus</taxon>
        <taxon>Aspergillus subgen. Fumigati</taxon>
    </lineage>
</organism>
<feature type="signal peptide" evidence="3">
    <location>
        <begin position="1"/>
        <end position="20"/>
    </location>
</feature>
<feature type="chain" id="PRO_0000245543" description="Crh-like protein 2">
    <location>
        <begin position="21"/>
        <end position="416"/>
    </location>
</feature>
<feature type="propeptide" id="PRO_0000245544" description="Removed in mature form" evidence="3">
    <location>
        <begin position="417"/>
        <end position="443"/>
    </location>
</feature>
<feature type="domain" description="GH16" evidence="4">
    <location>
        <begin position="21"/>
        <end position="306"/>
    </location>
</feature>
<feature type="region of interest" description="Disordered" evidence="5">
    <location>
        <begin position="350"/>
        <end position="420"/>
    </location>
</feature>
<feature type="compositionally biased region" description="Low complexity" evidence="5">
    <location>
        <begin position="350"/>
        <end position="367"/>
    </location>
</feature>
<feature type="compositionally biased region" description="Low complexity" evidence="5">
    <location>
        <begin position="378"/>
        <end position="410"/>
    </location>
</feature>
<feature type="compositionally biased region" description="Polar residues" evidence="5">
    <location>
        <begin position="411"/>
        <end position="420"/>
    </location>
</feature>
<feature type="active site" description="Nucleophile" evidence="1">
    <location>
        <position position="164"/>
    </location>
</feature>
<feature type="active site" description="Proton donor" evidence="1">
    <location>
        <position position="168"/>
    </location>
</feature>
<feature type="binding site" evidence="2">
    <location>
        <position position="168"/>
    </location>
    <ligand>
        <name>chitin</name>
        <dbReference type="ChEBI" id="CHEBI:17029"/>
    </ligand>
</feature>
<feature type="binding site" evidence="2">
    <location>
        <position position="257"/>
    </location>
    <ligand>
        <name>chitin</name>
        <dbReference type="ChEBI" id="CHEBI:17029"/>
    </ligand>
</feature>
<feature type="binding site" evidence="2">
    <location>
        <position position="268"/>
    </location>
    <ligand>
        <name>chitin</name>
        <dbReference type="ChEBI" id="CHEBI:17029"/>
    </ligand>
</feature>
<feature type="lipid moiety-binding region" description="GPI-like-anchor amidated asparagine" evidence="3">
    <location>
        <position position="416"/>
    </location>
</feature>
<feature type="glycosylation site" description="N-linked (GlcNAc...) asparagine" evidence="3">
    <location>
        <position position="194"/>
    </location>
</feature>
<feature type="glycosylation site" description="N-linked (GlcNAc...) asparagine" evidence="3">
    <location>
        <position position="237"/>
    </location>
</feature>
<feature type="glycosylation site" description="N-linked (GlcNAc...) asparagine" evidence="3">
    <location>
        <position position="332"/>
    </location>
</feature>
<feature type="glycosylation site" description="N-linked (GlcNAc...) asparagine" evidence="3">
    <location>
        <position position="359"/>
    </location>
</feature>
<feature type="glycosylation site" description="N-linked (GlcNAc...) asparagine" evidence="3">
    <location>
        <position position="427"/>
    </location>
</feature>
<feature type="disulfide bond" evidence="2">
    <location>
        <begin position="56"/>
        <end position="67"/>
    </location>
</feature>
<evidence type="ECO:0000250" key="1">
    <source>
        <dbReference type="UniProtKB" id="P27051"/>
    </source>
</evidence>
<evidence type="ECO:0000250" key="2">
    <source>
        <dbReference type="UniProtKB" id="Q8J0P4"/>
    </source>
</evidence>
<evidence type="ECO:0000255" key="3"/>
<evidence type="ECO:0000255" key="4">
    <source>
        <dbReference type="PROSITE-ProRule" id="PRU01098"/>
    </source>
</evidence>
<evidence type="ECO:0000256" key="5">
    <source>
        <dbReference type="SAM" id="MobiDB-lite"/>
    </source>
</evidence>
<evidence type="ECO:0000269" key="6">
    <source>
    </source>
</evidence>
<evidence type="ECO:0000303" key="7">
    <source>
    </source>
</evidence>
<evidence type="ECO:0000303" key="8">
    <source>
    </source>
</evidence>
<evidence type="ECO:0000305" key="9"/>
<evidence type="ECO:0000305" key="10">
    <source>
    </source>
</evidence>
<sequence>MVRIGSSLLLATLAATTVSAASDPPKCSQDSHCPEEWPCCSLYGQCGTGAYCLGGCDPLMSFSLDSCTPEPICQGKTYKDWSNLDNLASNTKYLGDASKSDWVYSGYPKVEDGNLLLTMPKNSVGTLIANNHYIWYGKITAKIKSSRGAGVVTGFILLSDTKDEIDYEFVGADLTNVQTNYYFQGVLDYNHGGNASVSGGNTFGDWHEYTIDWKPDAITWSVDGEVKRTLKKESTYNETSKQYMYPQTPSRMQLSLWPAGQASNAPGTIAWAGGEIDWDSEDIKDPGYYYATFGEITVECYDPPSGADIKGTKAYIFKDKAGLESSVQITNNKTVLASFGATGLDMDVGASSSASGSANKTSSSANTVPSGNGGSGNEPGNSHSGSSGSGTSTSDGSGSSTGFSQGSETSASSNKNAAPSQNERVLNGSFFAVLVAVVALVTL</sequence>
<protein>
    <recommendedName>
        <fullName evidence="8">Crh-like protein 2</fullName>
    </recommendedName>
    <domain>
        <recommendedName>
            <fullName evidence="8">Chitinase crh2</fullName>
            <ecNumber evidence="6">3.2.1.14</ecNumber>
        </recommendedName>
    </domain>
    <domain>
        <recommendedName>
            <fullName evidence="8">Chitin transglycosylase crh2</fullName>
            <ecNumber evidence="6">2.4.-.-</ecNumber>
        </recommendedName>
    </domain>
</protein>
<keyword id="KW-1003">Cell membrane</keyword>
<keyword id="KW-0134">Cell wall</keyword>
<keyword id="KW-0961">Cell wall biogenesis/degradation</keyword>
<keyword id="KW-0903">Direct protein sequencing</keyword>
<keyword id="KW-1015">Disulfide bond</keyword>
<keyword id="KW-0325">Glycoprotein</keyword>
<keyword id="KW-0326">Glycosidase</keyword>
<keyword id="KW-0328">Glycosyltransferase</keyword>
<keyword id="KW-0336">GPI-anchor</keyword>
<keyword id="KW-0378">Hydrolase</keyword>
<keyword id="KW-0449">Lipoprotein</keyword>
<keyword id="KW-0472">Membrane</keyword>
<keyword id="KW-1185">Reference proteome</keyword>
<keyword id="KW-0964">Secreted</keyword>
<keyword id="KW-0732">Signal</keyword>
<keyword id="KW-0808">Transferase</keyword>
<name>CRH2_ASPFU</name>
<comment type="function">
    <text evidence="6">Dual chitinase/transglycosylase that plays a role in cell wall architecture (PubMed:30971696). Chitinase and transglycosylase activities are coupled (PubMed:30971696). Required for the polysaccharide cross-linking at the septa and the cell wall (PubMed:30971696). More specifically, transfers chitin to 1,6-beta-glucan in the cell wall (PubMed:30971696).</text>
</comment>
<comment type="catalytic activity">
    <reaction evidence="10">
        <text>Random endo-hydrolysis of N-acetyl-beta-D-glucosaminide (1-&gt;4)-beta-linkages in chitin and chitodextrins.</text>
        <dbReference type="EC" id="3.2.1.14"/>
    </reaction>
</comment>
<comment type="subcellular location">
    <subcellularLocation>
        <location evidence="3">Cell membrane</location>
        <topology evidence="3">Lipid-anchor</topology>
        <topology evidence="3">GPI-anchor</topology>
    </subcellularLocation>
    <subcellularLocation>
        <location evidence="9">Secreted</location>
        <location evidence="9">Cell wall</location>
    </subcellularLocation>
</comment>
<comment type="PTM">
    <text evidence="9">The GPI-like anchor contains a phosphoceramide lipid group. The anchor position has not been determined.</text>
</comment>
<comment type="disruption phenotype">
    <text evidence="6">Does not affect growth rate, germination or sporulation and displays only minor sensitivity to high concentrations of Congo Red, even when all crh family members are deleted.</text>
</comment>
<comment type="similarity">
    <text evidence="9">Belongs to the glycosyl hydrolase 16 family. CRH1 subfamily.</text>
</comment>
<accession>Q4WI46</accession>
<gene>
    <name evidence="8" type="primary">crh2</name>
    <name type="synonym">crf2</name>
    <name evidence="7" type="synonym">utr2</name>
    <name type="ORF">AFUA_2G03120</name>
</gene>
<proteinExistence type="evidence at protein level"/>